<organism>
    <name type="scientific">Pseudomonas syringae pv. syringae (strain B728a)</name>
    <dbReference type="NCBI Taxonomy" id="205918"/>
    <lineage>
        <taxon>Bacteria</taxon>
        <taxon>Pseudomonadati</taxon>
        <taxon>Pseudomonadota</taxon>
        <taxon>Gammaproteobacteria</taxon>
        <taxon>Pseudomonadales</taxon>
        <taxon>Pseudomonadaceae</taxon>
        <taxon>Pseudomonas</taxon>
        <taxon>Pseudomonas syringae</taxon>
    </lineage>
</organism>
<reference key="1">
    <citation type="journal article" date="2005" name="Proc. Natl. Acad. Sci. U.S.A.">
        <title>Comparison of the complete genome sequences of Pseudomonas syringae pv. syringae B728a and pv. tomato DC3000.</title>
        <authorList>
            <person name="Feil H."/>
            <person name="Feil W.S."/>
            <person name="Chain P."/>
            <person name="Larimer F."/>
            <person name="Dibartolo G."/>
            <person name="Copeland A."/>
            <person name="Lykidis A."/>
            <person name="Trong S."/>
            <person name="Nolan M."/>
            <person name="Goltsman E."/>
            <person name="Thiel J."/>
            <person name="Malfatti S."/>
            <person name="Loper J.E."/>
            <person name="Lapidus A."/>
            <person name="Detter J.C."/>
            <person name="Land M."/>
            <person name="Richardson P.M."/>
            <person name="Kyrpides N.C."/>
            <person name="Ivanova N."/>
            <person name="Lindow S.E."/>
        </authorList>
    </citation>
    <scope>NUCLEOTIDE SEQUENCE [LARGE SCALE GENOMIC DNA]</scope>
    <source>
        <strain>B728a</strain>
    </source>
</reference>
<name>APAH_PSEU2</name>
<evidence type="ECO:0000255" key="1">
    <source>
        <dbReference type="HAMAP-Rule" id="MF_00199"/>
    </source>
</evidence>
<dbReference type="EC" id="3.6.1.41" evidence="1"/>
<dbReference type="EMBL" id="CP000075">
    <property type="protein sequence ID" value="AAY39659.1"/>
    <property type="molecule type" value="Genomic_DNA"/>
</dbReference>
<dbReference type="RefSeq" id="WP_011269135.1">
    <property type="nucleotide sequence ID" value="NC_007005.1"/>
</dbReference>
<dbReference type="RefSeq" id="YP_237697.1">
    <property type="nucleotide sequence ID" value="NC_007005.1"/>
</dbReference>
<dbReference type="SMR" id="Q4ZMG3"/>
<dbReference type="STRING" id="205918.Psyr_4629"/>
<dbReference type="KEGG" id="psb:Psyr_4629"/>
<dbReference type="PATRIC" id="fig|205918.7.peg.4774"/>
<dbReference type="eggNOG" id="COG0639">
    <property type="taxonomic scope" value="Bacteria"/>
</dbReference>
<dbReference type="HOGENOM" id="CLU_056184_2_0_6"/>
<dbReference type="OrthoDB" id="9807890at2"/>
<dbReference type="Proteomes" id="UP000000426">
    <property type="component" value="Chromosome"/>
</dbReference>
<dbReference type="GO" id="GO:0008803">
    <property type="term" value="F:bis(5'-nucleosyl)-tetraphosphatase (symmetrical) activity"/>
    <property type="evidence" value="ECO:0007669"/>
    <property type="project" value="UniProtKB-UniRule"/>
</dbReference>
<dbReference type="CDD" id="cd07422">
    <property type="entry name" value="MPP_ApaH"/>
    <property type="match status" value="1"/>
</dbReference>
<dbReference type="Gene3D" id="3.60.21.10">
    <property type="match status" value="1"/>
</dbReference>
<dbReference type="HAMAP" id="MF_00199">
    <property type="entry name" value="ApaH"/>
    <property type="match status" value="1"/>
</dbReference>
<dbReference type="InterPro" id="IPR004617">
    <property type="entry name" value="ApaH"/>
</dbReference>
<dbReference type="InterPro" id="IPR004843">
    <property type="entry name" value="Calcineurin-like_PHP_ApaH"/>
</dbReference>
<dbReference type="InterPro" id="IPR029052">
    <property type="entry name" value="Metallo-depent_PP-like"/>
</dbReference>
<dbReference type="NCBIfam" id="TIGR00668">
    <property type="entry name" value="apaH"/>
    <property type="match status" value="1"/>
</dbReference>
<dbReference type="NCBIfam" id="NF001204">
    <property type="entry name" value="PRK00166.1"/>
    <property type="match status" value="1"/>
</dbReference>
<dbReference type="PANTHER" id="PTHR40942">
    <property type="match status" value="1"/>
</dbReference>
<dbReference type="PANTHER" id="PTHR40942:SF4">
    <property type="entry name" value="CYTOCHROME C5"/>
    <property type="match status" value="1"/>
</dbReference>
<dbReference type="Pfam" id="PF00149">
    <property type="entry name" value="Metallophos"/>
    <property type="match status" value="1"/>
</dbReference>
<dbReference type="PIRSF" id="PIRSF000903">
    <property type="entry name" value="B5n-ttraPtase_sm"/>
    <property type="match status" value="1"/>
</dbReference>
<dbReference type="SUPFAM" id="SSF56300">
    <property type="entry name" value="Metallo-dependent phosphatases"/>
    <property type="match status" value="1"/>
</dbReference>
<sequence length="291" mass="32716">MAVYAVGDLQGCLEPLQCLLEHVHFNPEQDRLWLVGDLVNRGPQSLETLRYLYSLRESLVCVLGNHDLHLLAVARKKELLKKGDTLLEILEAPDRDDLLGWVRRQKLMHYDAQRNVAMVHAGIAPQWTLKKALKHAAEVEHALQDEQLYGAFLDGMYGNEPTRWDNDLQGVTRLRVITNYFTRMRFCTSDGKLDLKSKEGVGTAIPGYAPWFSHQSRKTRDVKIIFGHWAALEGRCDEPDVFALDSGCVWGGSMTLLNVDTLERHQCNCDAMGNAADGLVTRVQPGATPLP</sequence>
<feature type="chain" id="PRO_1000012082" description="Bis(5'-nucleosyl)-tetraphosphatase, symmetrical">
    <location>
        <begin position="1"/>
        <end position="291"/>
    </location>
</feature>
<accession>Q4ZMG3</accession>
<protein>
    <recommendedName>
        <fullName evidence="1">Bis(5'-nucleosyl)-tetraphosphatase, symmetrical</fullName>
        <ecNumber evidence="1">3.6.1.41</ecNumber>
    </recommendedName>
    <alternativeName>
        <fullName evidence="1">Ap4A hydrolase</fullName>
    </alternativeName>
    <alternativeName>
        <fullName evidence="1">Diadenosine 5',5'''-P1,P4-tetraphosphate pyrophosphohydrolase</fullName>
    </alternativeName>
    <alternativeName>
        <fullName evidence="1">Diadenosine tetraphosphatase</fullName>
    </alternativeName>
</protein>
<proteinExistence type="inferred from homology"/>
<gene>
    <name evidence="1" type="primary">apaH</name>
    <name type="ordered locus">Psyr_4629</name>
</gene>
<comment type="function">
    <text evidence="1">Hydrolyzes diadenosine 5',5'''-P1,P4-tetraphosphate to yield ADP.</text>
</comment>
<comment type="catalytic activity">
    <reaction evidence="1">
        <text>P(1),P(4)-bis(5'-adenosyl) tetraphosphate + H2O = 2 ADP + 2 H(+)</text>
        <dbReference type="Rhea" id="RHEA:24252"/>
        <dbReference type="ChEBI" id="CHEBI:15377"/>
        <dbReference type="ChEBI" id="CHEBI:15378"/>
        <dbReference type="ChEBI" id="CHEBI:58141"/>
        <dbReference type="ChEBI" id="CHEBI:456216"/>
        <dbReference type="EC" id="3.6.1.41"/>
    </reaction>
</comment>
<comment type="similarity">
    <text evidence="1">Belongs to the Ap4A hydrolase family.</text>
</comment>
<keyword id="KW-0378">Hydrolase</keyword>